<dbReference type="EMBL" id="AP008231">
    <property type="protein sequence ID" value="BAD78563.1"/>
    <property type="molecule type" value="Genomic_DNA"/>
</dbReference>
<dbReference type="RefSeq" id="WP_011242685.1">
    <property type="nucleotide sequence ID" value="NZ_CP085785.1"/>
</dbReference>
<dbReference type="SMR" id="Q5N556"/>
<dbReference type="GeneID" id="72430035"/>
<dbReference type="KEGG" id="syc:syc0373_d"/>
<dbReference type="eggNOG" id="ENOG5032RR6">
    <property type="taxonomic scope" value="Bacteria"/>
</dbReference>
<dbReference type="Proteomes" id="UP000001175">
    <property type="component" value="Chromosome"/>
</dbReference>
<dbReference type="GO" id="GO:0009539">
    <property type="term" value="C:photosystem II reaction center"/>
    <property type="evidence" value="ECO:0007669"/>
    <property type="project" value="InterPro"/>
</dbReference>
<dbReference type="GO" id="GO:0031676">
    <property type="term" value="C:plasma membrane-derived thylakoid membrane"/>
    <property type="evidence" value="ECO:0007669"/>
    <property type="project" value="UniProtKB-SubCell"/>
</dbReference>
<dbReference type="GO" id="GO:0009055">
    <property type="term" value="F:electron transfer activity"/>
    <property type="evidence" value="ECO:0007669"/>
    <property type="project" value="UniProtKB-UniRule"/>
</dbReference>
<dbReference type="GO" id="GO:0020037">
    <property type="term" value="F:heme binding"/>
    <property type="evidence" value="ECO:0007669"/>
    <property type="project" value="InterPro"/>
</dbReference>
<dbReference type="GO" id="GO:0005506">
    <property type="term" value="F:iron ion binding"/>
    <property type="evidence" value="ECO:0007669"/>
    <property type="project" value="UniProtKB-UniRule"/>
</dbReference>
<dbReference type="GO" id="GO:0009767">
    <property type="term" value="P:photosynthetic electron transport chain"/>
    <property type="evidence" value="ECO:0007669"/>
    <property type="project" value="InterPro"/>
</dbReference>
<dbReference type="Gene3D" id="1.20.5.860">
    <property type="entry name" value="Photosystem II cytochrome b559, alpha subunit"/>
    <property type="match status" value="1"/>
</dbReference>
<dbReference type="HAMAP" id="MF_00642">
    <property type="entry name" value="PSII_PsbE"/>
    <property type="match status" value="1"/>
</dbReference>
<dbReference type="InterPro" id="IPR006217">
    <property type="entry name" value="PSII_cyt_b559_asu"/>
</dbReference>
<dbReference type="InterPro" id="IPR037025">
    <property type="entry name" value="PSII_cyt_b559_asu_sf"/>
</dbReference>
<dbReference type="InterPro" id="IPR006216">
    <property type="entry name" value="PSII_cyt_b559_CS"/>
</dbReference>
<dbReference type="InterPro" id="IPR013081">
    <property type="entry name" value="PSII_cyt_b559_N"/>
</dbReference>
<dbReference type="InterPro" id="IPR013082">
    <property type="entry name" value="PSII_cytb559_asu_lum"/>
</dbReference>
<dbReference type="NCBIfam" id="TIGR01332">
    <property type="entry name" value="cyt_b559_alpha"/>
    <property type="match status" value="1"/>
</dbReference>
<dbReference type="PANTHER" id="PTHR33391">
    <property type="entry name" value="CYTOCHROME B559 SUBUNIT BETA-RELATED"/>
    <property type="match status" value="1"/>
</dbReference>
<dbReference type="PANTHER" id="PTHR33391:SF9">
    <property type="entry name" value="CYTOCHROME B559 SUBUNIT BETA-RELATED"/>
    <property type="match status" value="1"/>
</dbReference>
<dbReference type="Pfam" id="PF00283">
    <property type="entry name" value="Cytochrom_B559"/>
    <property type="match status" value="1"/>
</dbReference>
<dbReference type="Pfam" id="PF00284">
    <property type="entry name" value="Cytochrom_B559a"/>
    <property type="match status" value="1"/>
</dbReference>
<dbReference type="PIRSF" id="PIRSF000036">
    <property type="entry name" value="PsbE"/>
    <property type="match status" value="1"/>
</dbReference>
<dbReference type="SUPFAM" id="SSF161045">
    <property type="entry name" value="Cytochrome b559 subunits"/>
    <property type="match status" value="1"/>
</dbReference>
<dbReference type="PROSITE" id="PS00537">
    <property type="entry name" value="CYTOCHROME_B559"/>
    <property type="match status" value="1"/>
</dbReference>
<sequence length="83" mass="9334">MAGGSTGERPFTDIITSIRYWVIHSITIPALFIAGWLFVSTGLAYDAFGTPRPNEYFTQDRTEVPIVSDRYSAKQQVDRFSAK</sequence>
<reference key="1">
    <citation type="journal article" date="2007" name="Photosyn. Res.">
        <title>Complete nucleotide sequence of the freshwater unicellular cyanobacterium Synechococcus elongatus PCC 6301 chromosome: gene content and organization.</title>
        <authorList>
            <person name="Sugita C."/>
            <person name="Ogata K."/>
            <person name="Shikata M."/>
            <person name="Jikuya H."/>
            <person name="Takano J."/>
            <person name="Furumichi M."/>
            <person name="Kanehisa M."/>
            <person name="Omata T."/>
            <person name="Sugiura M."/>
            <person name="Sugita M."/>
        </authorList>
    </citation>
    <scope>NUCLEOTIDE SEQUENCE [LARGE SCALE GENOMIC DNA]</scope>
    <source>
        <strain>ATCC 27144 / PCC 6301 / SAUG 1402/1</strain>
    </source>
</reference>
<accession>Q5N556</accession>
<protein>
    <recommendedName>
        <fullName evidence="1">Cytochrome b559 subunit alpha</fullName>
    </recommendedName>
    <alternativeName>
        <fullName evidence="1">PSII reaction center subunit V</fullName>
    </alternativeName>
</protein>
<comment type="function">
    <text evidence="1">This b-type cytochrome is tightly associated with the reaction center of photosystem II (PSII). PSII is a light-driven water:plastoquinone oxidoreductase that uses light energy to abstract electrons from H(2)O, generating O(2) and a proton gradient subsequently used for ATP formation. It consists of a core antenna complex that captures photons, and an electron transfer chain that converts photonic excitation into a charge separation.</text>
</comment>
<comment type="cofactor">
    <cofactor evidence="1">
        <name>heme b</name>
        <dbReference type="ChEBI" id="CHEBI:60344"/>
    </cofactor>
    <text evidence="1">With its partner (PsbF) binds heme. PSII binds additional chlorophylls, carotenoids and specific lipids.</text>
</comment>
<comment type="subunit">
    <text evidence="1">Heterodimer of an alpha subunit and a beta subunit. PSII is composed of 1 copy each of membrane proteins PsbA, PsbB, PsbC, PsbD, PsbE, PsbF, PsbH, PsbI, PsbJ, PsbK, PsbL, PsbM, PsbT, PsbX, PsbY, PsbZ, Psb30/Ycf12, peripheral proteins PsbO, CyanoQ (PsbQ), PsbU, PsbV and a large number of cofactors. It forms dimeric complexes.</text>
</comment>
<comment type="subcellular location">
    <subcellularLocation>
        <location evidence="1">Cellular thylakoid membrane</location>
        <topology evidence="1">Single-pass membrane protein</topology>
    </subcellularLocation>
</comment>
<comment type="similarity">
    <text evidence="1">Belongs to the PsbE/PsbF family.</text>
</comment>
<organism>
    <name type="scientific">Synechococcus sp. (strain ATCC 27144 / PCC 6301 / SAUG 1402/1)</name>
    <name type="common">Anacystis nidulans</name>
    <dbReference type="NCBI Taxonomy" id="269084"/>
    <lineage>
        <taxon>Bacteria</taxon>
        <taxon>Bacillati</taxon>
        <taxon>Cyanobacteriota</taxon>
        <taxon>Cyanophyceae</taxon>
        <taxon>Synechococcales</taxon>
        <taxon>Synechococcaceae</taxon>
        <taxon>Synechococcus</taxon>
    </lineage>
</organism>
<evidence type="ECO:0000255" key="1">
    <source>
        <dbReference type="HAMAP-Rule" id="MF_00642"/>
    </source>
</evidence>
<feature type="chain" id="PRO_0000233223" description="Cytochrome b559 subunit alpha">
    <location>
        <begin position="1"/>
        <end position="83"/>
    </location>
</feature>
<feature type="transmembrane region" description="Helical" evidence="1">
    <location>
        <begin position="22"/>
        <end position="36"/>
    </location>
</feature>
<feature type="binding site" description="axial binding residue" evidence="1">
    <location>
        <position position="24"/>
    </location>
    <ligand>
        <name>heme</name>
        <dbReference type="ChEBI" id="CHEBI:30413"/>
        <note>ligand shared with beta subunit</note>
    </ligand>
    <ligandPart>
        <name>Fe</name>
        <dbReference type="ChEBI" id="CHEBI:18248"/>
    </ligandPart>
</feature>
<gene>
    <name evidence="1" type="primary">psbE</name>
    <name type="ordered locus">syc0373_d</name>
</gene>
<keyword id="KW-0249">Electron transport</keyword>
<keyword id="KW-0349">Heme</keyword>
<keyword id="KW-0408">Iron</keyword>
<keyword id="KW-0472">Membrane</keyword>
<keyword id="KW-0479">Metal-binding</keyword>
<keyword id="KW-0602">Photosynthesis</keyword>
<keyword id="KW-0604">Photosystem II</keyword>
<keyword id="KW-0793">Thylakoid</keyword>
<keyword id="KW-0812">Transmembrane</keyword>
<keyword id="KW-1133">Transmembrane helix</keyword>
<keyword id="KW-0813">Transport</keyword>
<name>PSBE_SYNP6</name>
<proteinExistence type="inferred from homology"/>